<dbReference type="EMBL" id="L43821">
    <property type="protein sequence ID" value="AAA98770.1"/>
    <property type="molecule type" value="mRNA"/>
</dbReference>
<dbReference type="EMBL" id="U64317">
    <property type="protein sequence ID" value="AAB53696.1"/>
    <property type="molecule type" value="mRNA"/>
</dbReference>
<dbReference type="EMBL" id="AK292682">
    <property type="protein sequence ID" value="BAF85371.1"/>
    <property type="molecule type" value="mRNA"/>
</dbReference>
<dbReference type="EMBL" id="AL022098">
    <property type="status" value="NOT_ANNOTATED_CDS"/>
    <property type="molecule type" value="Genomic_DNA"/>
</dbReference>
<dbReference type="EMBL" id="AL136139">
    <property type="status" value="NOT_ANNOTATED_CDS"/>
    <property type="molecule type" value="Genomic_DNA"/>
</dbReference>
<dbReference type="EMBL" id="AL139807">
    <property type="status" value="NOT_ANNOTATED_CDS"/>
    <property type="molecule type" value="Genomic_DNA"/>
</dbReference>
<dbReference type="EMBL" id="AL512382">
    <property type="status" value="NOT_ANNOTATED_CDS"/>
    <property type="molecule type" value="Genomic_DNA"/>
</dbReference>
<dbReference type="EMBL" id="CH471087">
    <property type="protein sequence ID" value="EAW55299.1"/>
    <property type="molecule type" value="Genomic_DNA"/>
</dbReference>
<dbReference type="EMBL" id="CH471087">
    <property type="protein sequence ID" value="EAW55301.1"/>
    <property type="molecule type" value="Genomic_DNA"/>
</dbReference>
<dbReference type="EMBL" id="BC020686">
    <property type="protein sequence ID" value="AAH20686.1"/>
    <property type="molecule type" value="mRNA"/>
</dbReference>
<dbReference type="EMBL" id="BC040207">
    <property type="protein sequence ID" value="AAH40207.1"/>
    <property type="molecule type" value="mRNA"/>
</dbReference>
<dbReference type="CCDS" id="CCDS34340.1">
    <molecule id="Q14511-2"/>
</dbReference>
<dbReference type="CCDS" id="CCDS4520.1">
    <molecule id="Q14511-1"/>
</dbReference>
<dbReference type="CCDS" id="CCDS47373.1">
    <molecule id="Q14511-3"/>
</dbReference>
<dbReference type="RefSeq" id="NP_001135865.1">
    <molecule id="Q14511-3"/>
    <property type="nucleotide sequence ID" value="NM_001142393.2"/>
</dbReference>
<dbReference type="RefSeq" id="NP_001257962.1">
    <property type="nucleotide sequence ID" value="NM_001271033.1"/>
</dbReference>
<dbReference type="RefSeq" id="NP_006394.1">
    <molecule id="Q14511-1"/>
    <property type="nucleotide sequence ID" value="NM_006403.4"/>
</dbReference>
<dbReference type="RefSeq" id="NP_892011.2">
    <molecule id="Q14511-2"/>
    <property type="nucleotide sequence ID" value="NM_182966.4"/>
</dbReference>
<dbReference type="PDB" id="2L81">
    <property type="method" value="NMR"/>
    <property type="chains" value="A=399-563"/>
</dbReference>
<dbReference type="PDB" id="5X3S">
    <property type="method" value="X-ray"/>
    <property type="resolution" value="2.90 A"/>
    <property type="chains" value="C/D=799-809"/>
</dbReference>
<dbReference type="PDBsum" id="2L81"/>
<dbReference type="PDBsum" id="5X3S"/>
<dbReference type="BMRB" id="Q14511"/>
<dbReference type="SMR" id="Q14511"/>
<dbReference type="BioGRID" id="110816">
    <property type="interactions" value="81"/>
</dbReference>
<dbReference type="CORUM" id="Q14511"/>
<dbReference type="ELM" id="Q14511"/>
<dbReference type="FunCoup" id="Q14511">
    <property type="interactions" value="900"/>
</dbReference>
<dbReference type="IntAct" id="Q14511">
    <property type="interactions" value="55"/>
</dbReference>
<dbReference type="MINT" id="Q14511"/>
<dbReference type="STRING" id="9606.ENSP00000368759"/>
<dbReference type="GlyCosmos" id="Q14511">
    <property type="glycosylation" value="1 site, 2 glycans"/>
</dbReference>
<dbReference type="GlyGen" id="Q14511">
    <property type="glycosylation" value="2 sites, 2 O-linked glycans (1 site)"/>
</dbReference>
<dbReference type="iPTMnet" id="Q14511"/>
<dbReference type="PhosphoSitePlus" id="Q14511"/>
<dbReference type="BioMuta" id="NEDD9"/>
<dbReference type="DMDM" id="8134360"/>
<dbReference type="jPOST" id="Q14511"/>
<dbReference type="MassIVE" id="Q14511"/>
<dbReference type="PaxDb" id="9606-ENSP00000368759"/>
<dbReference type="PeptideAtlas" id="Q14511"/>
<dbReference type="ProteomicsDB" id="34087"/>
<dbReference type="ProteomicsDB" id="60015">
    <molecule id="Q14511-1"/>
</dbReference>
<dbReference type="ProteomicsDB" id="60016">
    <molecule id="Q14511-2"/>
</dbReference>
<dbReference type="Antibodypedia" id="10092">
    <property type="antibodies" value="358 antibodies from 37 providers"/>
</dbReference>
<dbReference type="DNASU" id="4739"/>
<dbReference type="Ensembl" id="ENST00000379433.5">
    <molecule id="Q14511-2"/>
    <property type="protein sequence ID" value="ENSP00000368745.5"/>
    <property type="gene ID" value="ENSG00000111859.17"/>
</dbReference>
<dbReference type="Ensembl" id="ENST00000379446.10">
    <molecule id="Q14511-1"/>
    <property type="protein sequence ID" value="ENSP00000368759.5"/>
    <property type="gene ID" value="ENSG00000111859.17"/>
</dbReference>
<dbReference type="Ensembl" id="ENST00000504387.5">
    <molecule id="Q14511-3"/>
    <property type="protein sequence ID" value="ENSP00000422871.1"/>
    <property type="gene ID" value="ENSG00000111859.17"/>
</dbReference>
<dbReference type="GeneID" id="4739"/>
<dbReference type="KEGG" id="hsa:4739"/>
<dbReference type="MANE-Select" id="ENST00000379446.10">
    <property type="protein sequence ID" value="ENSP00000368759.5"/>
    <property type="RefSeq nucleotide sequence ID" value="NM_006403.4"/>
    <property type="RefSeq protein sequence ID" value="NP_006394.1"/>
</dbReference>
<dbReference type="UCSC" id="uc003mzv.2">
    <molecule id="Q14511-1"/>
    <property type="organism name" value="human"/>
</dbReference>
<dbReference type="AGR" id="HGNC:7733"/>
<dbReference type="CTD" id="4739"/>
<dbReference type="DisGeNET" id="4739"/>
<dbReference type="GeneCards" id="NEDD9"/>
<dbReference type="HGNC" id="HGNC:7733">
    <property type="gene designation" value="NEDD9"/>
</dbReference>
<dbReference type="HPA" id="ENSG00000111859">
    <property type="expression patterns" value="Low tissue specificity"/>
</dbReference>
<dbReference type="MIM" id="602265">
    <property type="type" value="gene"/>
</dbReference>
<dbReference type="neXtProt" id="NX_Q14511"/>
<dbReference type="OpenTargets" id="ENSG00000111859"/>
<dbReference type="PharmGKB" id="PA31538"/>
<dbReference type="VEuPathDB" id="HostDB:ENSG00000111859"/>
<dbReference type="eggNOG" id="ENOG502QQHE">
    <property type="taxonomic scope" value="Eukaryota"/>
</dbReference>
<dbReference type="GeneTree" id="ENSGT00950000183008"/>
<dbReference type="HOGENOM" id="CLU_017000_1_0_1"/>
<dbReference type="InParanoid" id="Q14511"/>
<dbReference type="OMA" id="VYEFPTK"/>
<dbReference type="OrthoDB" id="5983572at2759"/>
<dbReference type="PAN-GO" id="Q14511">
    <property type="GO annotations" value="4 GO annotations based on evolutionary models"/>
</dbReference>
<dbReference type="PhylomeDB" id="Q14511"/>
<dbReference type="TreeFam" id="TF328782"/>
<dbReference type="PathwayCommons" id="Q14511"/>
<dbReference type="SignaLink" id="Q14511"/>
<dbReference type="SIGNOR" id="Q14511"/>
<dbReference type="BioGRID-ORCS" id="4739">
    <property type="hits" value="23 hits in 1146 CRISPR screens"/>
</dbReference>
<dbReference type="CD-CODE" id="8C2F96ED">
    <property type="entry name" value="Centrosome"/>
</dbReference>
<dbReference type="ChiTaRS" id="NEDD9">
    <property type="organism name" value="human"/>
</dbReference>
<dbReference type="EvolutionaryTrace" id="Q14511"/>
<dbReference type="GeneWiki" id="NEDD9"/>
<dbReference type="GenomeRNAi" id="4739"/>
<dbReference type="Pharos" id="Q14511">
    <property type="development level" value="Tbio"/>
</dbReference>
<dbReference type="PRO" id="PR:Q14511"/>
<dbReference type="Proteomes" id="UP000005640">
    <property type="component" value="Chromosome 6"/>
</dbReference>
<dbReference type="RNAct" id="Q14511">
    <property type="molecule type" value="protein"/>
</dbReference>
<dbReference type="Bgee" id="ENSG00000111859">
    <property type="expression patterns" value="Expressed in right lung and 189 other cell types or tissues"/>
</dbReference>
<dbReference type="ExpressionAtlas" id="Q14511">
    <property type="expression patterns" value="baseline and differential"/>
</dbReference>
<dbReference type="GO" id="GO:0016323">
    <property type="term" value="C:basolateral plasma membrane"/>
    <property type="evidence" value="ECO:0000250"/>
    <property type="project" value="UniProtKB"/>
</dbReference>
<dbReference type="GO" id="GO:0005938">
    <property type="term" value="C:cell cortex"/>
    <property type="evidence" value="ECO:0007669"/>
    <property type="project" value="UniProtKB-SubCell"/>
</dbReference>
<dbReference type="GO" id="GO:0036064">
    <property type="term" value="C:ciliary basal body"/>
    <property type="evidence" value="ECO:0000314"/>
    <property type="project" value="UniProtKB"/>
</dbReference>
<dbReference type="GO" id="GO:0005737">
    <property type="term" value="C:cytoplasm"/>
    <property type="evidence" value="ECO:0000318"/>
    <property type="project" value="GO_Central"/>
</dbReference>
<dbReference type="GO" id="GO:0005829">
    <property type="term" value="C:cytosol"/>
    <property type="evidence" value="ECO:0000314"/>
    <property type="project" value="HPA"/>
</dbReference>
<dbReference type="GO" id="GO:0005925">
    <property type="term" value="C:focal adhesion"/>
    <property type="evidence" value="ECO:0000314"/>
    <property type="project" value="UniProtKB"/>
</dbReference>
<dbReference type="GO" id="GO:0005794">
    <property type="term" value="C:Golgi apparatus"/>
    <property type="evidence" value="ECO:0007669"/>
    <property type="project" value="UniProtKB-SubCell"/>
</dbReference>
<dbReference type="GO" id="GO:0001772">
    <property type="term" value="C:immunological synapse"/>
    <property type="evidence" value="ECO:0000250"/>
    <property type="project" value="UniProtKB"/>
</dbReference>
<dbReference type="GO" id="GO:0030027">
    <property type="term" value="C:lamellipodium"/>
    <property type="evidence" value="ECO:0007669"/>
    <property type="project" value="UniProtKB-SubCell"/>
</dbReference>
<dbReference type="GO" id="GO:0072686">
    <property type="term" value="C:mitotic spindle"/>
    <property type="evidence" value="ECO:0000314"/>
    <property type="project" value="UniProtKB"/>
</dbReference>
<dbReference type="GO" id="GO:0005654">
    <property type="term" value="C:nucleoplasm"/>
    <property type="evidence" value="ECO:0000314"/>
    <property type="project" value="HPA"/>
</dbReference>
<dbReference type="GO" id="GO:0005634">
    <property type="term" value="C:nucleus"/>
    <property type="evidence" value="ECO:0000314"/>
    <property type="project" value="UniProtKB"/>
</dbReference>
<dbReference type="GO" id="GO:0005886">
    <property type="term" value="C:plasma membrane"/>
    <property type="evidence" value="ECO:0000314"/>
    <property type="project" value="HPA"/>
</dbReference>
<dbReference type="GO" id="GO:0005819">
    <property type="term" value="C:spindle"/>
    <property type="evidence" value="ECO:0000304"/>
    <property type="project" value="ProtInc"/>
</dbReference>
<dbReference type="GO" id="GO:0000922">
    <property type="term" value="C:spindle pole"/>
    <property type="evidence" value="ECO:0000250"/>
    <property type="project" value="UniProtKB"/>
</dbReference>
<dbReference type="GO" id="GO:1990782">
    <property type="term" value="F:protein tyrosine kinase binding"/>
    <property type="evidence" value="ECO:0000353"/>
    <property type="project" value="UniProtKB"/>
</dbReference>
<dbReference type="GO" id="GO:0051017">
    <property type="term" value="P:actin filament bundle assembly"/>
    <property type="evidence" value="ECO:0000303"/>
    <property type="project" value="UniProtKB"/>
</dbReference>
<dbReference type="GO" id="GO:0007155">
    <property type="term" value="P:cell adhesion"/>
    <property type="evidence" value="ECO:0000303"/>
    <property type="project" value="ProtInc"/>
</dbReference>
<dbReference type="GO" id="GO:0051301">
    <property type="term" value="P:cell division"/>
    <property type="evidence" value="ECO:0007669"/>
    <property type="project" value="UniProtKB-KW"/>
</dbReference>
<dbReference type="GO" id="GO:0016477">
    <property type="term" value="P:cell migration"/>
    <property type="evidence" value="ECO:0000318"/>
    <property type="project" value="GO_Central"/>
</dbReference>
<dbReference type="GO" id="GO:0007169">
    <property type="term" value="P:cell surface receptor protein tyrosine kinase signaling pathway"/>
    <property type="evidence" value="ECO:0000318"/>
    <property type="project" value="GO_Central"/>
</dbReference>
<dbReference type="GO" id="GO:0061523">
    <property type="term" value="P:cilium disassembly"/>
    <property type="evidence" value="ECO:0000315"/>
    <property type="project" value="UniProtKB"/>
</dbReference>
<dbReference type="GO" id="GO:0007010">
    <property type="term" value="P:cytoskeleton organization"/>
    <property type="evidence" value="ECO:0000303"/>
    <property type="project" value="UniProtKB"/>
</dbReference>
<dbReference type="GO" id="GO:0007229">
    <property type="term" value="P:integrin-mediated signaling pathway"/>
    <property type="evidence" value="ECO:0000303"/>
    <property type="project" value="UniProtKB"/>
</dbReference>
<dbReference type="GO" id="GO:0007611">
    <property type="term" value="P:learning or memory"/>
    <property type="evidence" value="ECO:0000250"/>
    <property type="project" value="UniProtKB"/>
</dbReference>
<dbReference type="GO" id="GO:0097021">
    <property type="term" value="P:lymphocyte migration into lymphoid organs"/>
    <property type="evidence" value="ECO:0000250"/>
    <property type="project" value="UniProtKB"/>
</dbReference>
<dbReference type="GO" id="GO:0030336">
    <property type="term" value="P:negative regulation of cell migration"/>
    <property type="evidence" value="ECO:0000250"/>
    <property type="project" value="UniProtKB"/>
</dbReference>
<dbReference type="GO" id="GO:0030335">
    <property type="term" value="P:positive regulation of cell migration"/>
    <property type="evidence" value="ECO:0000315"/>
    <property type="project" value="UniProtKB"/>
</dbReference>
<dbReference type="GO" id="GO:1902952">
    <property type="term" value="P:positive regulation of dendritic spine maintenance"/>
    <property type="evidence" value="ECO:0000250"/>
    <property type="project" value="UniProtKB"/>
</dbReference>
<dbReference type="GO" id="GO:2000522">
    <property type="term" value="P:positive regulation of immunological synapse formation"/>
    <property type="evidence" value="ECO:0000250"/>
    <property type="project" value="UniProtKB"/>
</dbReference>
<dbReference type="GO" id="GO:0140131">
    <property type="term" value="P:positive regulation of lymphocyte chemotaxis"/>
    <property type="evidence" value="ECO:0000250"/>
    <property type="project" value="UniProtKB"/>
</dbReference>
<dbReference type="GO" id="GO:0045672">
    <property type="term" value="P:positive regulation of osteoclast differentiation"/>
    <property type="evidence" value="ECO:0000250"/>
    <property type="project" value="UniProtKB"/>
</dbReference>
<dbReference type="GO" id="GO:1903829">
    <property type="term" value="P:positive regulation of protein localization"/>
    <property type="evidence" value="ECO:0000250"/>
    <property type="project" value="UniProtKB"/>
</dbReference>
<dbReference type="GO" id="GO:0061098">
    <property type="term" value="P:positive regulation of protein tyrosine kinase activity"/>
    <property type="evidence" value="ECO:0000314"/>
    <property type="project" value="UniProtKB"/>
</dbReference>
<dbReference type="GO" id="GO:1900026">
    <property type="term" value="P:positive regulation of substrate adhesion-dependent cell spreading"/>
    <property type="evidence" value="ECO:0000315"/>
    <property type="project" value="UniProtKB"/>
</dbReference>
<dbReference type="GO" id="GO:0032956">
    <property type="term" value="P:regulation of actin cytoskeleton organization"/>
    <property type="evidence" value="ECO:0000250"/>
    <property type="project" value="UniProtKB"/>
</dbReference>
<dbReference type="GO" id="GO:0007165">
    <property type="term" value="P:signal transduction"/>
    <property type="evidence" value="ECO:0000304"/>
    <property type="project" value="ProtInc"/>
</dbReference>
<dbReference type="CDD" id="cd11570">
    <property type="entry name" value="FAT-like_NEDD9_C"/>
    <property type="match status" value="1"/>
</dbReference>
<dbReference type="CDD" id="cd11550">
    <property type="entry name" value="Serine_rich_NEDD9"/>
    <property type="match status" value="1"/>
</dbReference>
<dbReference type="CDD" id="cd12002">
    <property type="entry name" value="SH3_NEDD9"/>
    <property type="match status" value="1"/>
</dbReference>
<dbReference type="FunFam" id="1.20.120.230:FF:000001">
    <property type="entry name" value="Breast cancer anti-estrogen resistance 1"/>
    <property type="match status" value="1"/>
</dbReference>
<dbReference type="FunFam" id="2.30.30.40:FF:000009">
    <property type="entry name" value="Breast cancer anti-estrogen resistance 1"/>
    <property type="match status" value="1"/>
</dbReference>
<dbReference type="FunFam" id="1.20.120.830:FF:000002">
    <property type="entry name" value="Neural cell expressed, developmentally down-regulated 9"/>
    <property type="match status" value="1"/>
</dbReference>
<dbReference type="Gene3D" id="1.20.120.230">
    <property type="entry name" value="Alpha-catenin/vinculin-like"/>
    <property type="match status" value="1"/>
</dbReference>
<dbReference type="Gene3D" id="1.20.120.830">
    <property type="entry name" value="Serine-rich domain"/>
    <property type="match status" value="1"/>
</dbReference>
<dbReference type="Gene3D" id="2.30.30.40">
    <property type="entry name" value="SH3 Domains"/>
    <property type="match status" value="1"/>
</dbReference>
<dbReference type="InterPro" id="IPR021901">
    <property type="entry name" value="CAS_C"/>
</dbReference>
<dbReference type="InterPro" id="IPR037362">
    <property type="entry name" value="CAS_fam"/>
</dbReference>
<dbReference type="InterPro" id="IPR035746">
    <property type="entry name" value="NEDD9_SH3"/>
</dbReference>
<dbReference type="InterPro" id="IPR014928">
    <property type="entry name" value="Serine_rich_dom"/>
</dbReference>
<dbReference type="InterPro" id="IPR038319">
    <property type="entry name" value="Serine_rich_sf"/>
</dbReference>
<dbReference type="InterPro" id="IPR036028">
    <property type="entry name" value="SH3-like_dom_sf"/>
</dbReference>
<dbReference type="InterPro" id="IPR001452">
    <property type="entry name" value="SH3_domain"/>
</dbReference>
<dbReference type="PANTHER" id="PTHR10654">
    <property type="entry name" value="CAS SCAFFOLDING PROTEIN"/>
    <property type="match status" value="1"/>
</dbReference>
<dbReference type="PANTHER" id="PTHR10654:SF20">
    <property type="entry name" value="ENHANCER OF FILAMENTATION 1"/>
    <property type="match status" value="1"/>
</dbReference>
<dbReference type="Pfam" id="PF12026">
    <property type="entry name" value="CAS_C"/>
    <property type="match status" value="1"/>
</dbReference>
<dbReference type="Pfam" id="PF08824">
    <property type="entry name" value="Serine_rich"/>
    <property type="match status" value="1"/>
</dbReference>
<dbReference type="Pfam" id="PF14604">
    <property type="entry name" value="SH3_9"/>
    <property type="match status" value="1"/>
</dbReference>
<dbReference type="SMART" id="SM00326">
    <property type="entry name" value="SH3"/>
    <property type="match status" value="1"/>
</dbReference>
<dbReference type="SUPFAM" id="SSF50044">
    <property type="entry name" value="SH3-domain"/>
    <property type="match status" value="1"/>
</dbReference>
<dbReference type="PROSITE" id="PS50002">
    <property type="entry name" value="SH3"/>
    <property type="match status" value="1"/>
</dbReference>
<protein>
    <recommendedName>
        <fullName evidence="31">Enhancer of filamentation 1</fullName>
        <shortName evidence="31">hEF1</shortName>
    </recommendedName>
    <alternativeName>
        <fullName evidence="30">CRK-associated substrate-related protein</fullName>
        <shortName evidence="30">CAS-L</shortName>
        <shortName evidence="26">CasL</shortName>
    </alternativeName>
    <alternativeName>
        <fullName evidence="33">Cas scaffolding protein family member 2</fullName>
        <shortName evidence="33">CASS2</shortName>
    </alternativeName>
    <alternativeName>
        <fullName evidence="33">Neural precursor cell expressed developmentally down-regulated protein 9</fullName>
        <shortName evidence="33">NEDD-9</shortName>
    </alternativeName>
    <alternativeName>
        <fullName evidence="25">Renal carcinoma antigen NY-REN-12</fullName>
    </alternativeName>
    <alternativeName>
        <fullName evidence="29">p105</fullName>
    </alternativeName>
    <component>
        <recommendedName>
            <fullName>Enhancer of filamentation 1 p55</fullName>
        </recommendedName>
    </component>
</protein>
<proteinExistence type="evidence at protein level"/>
<keyword id="KW-0002">3D-structure</keyword>
<keyword id="KW-0025">Alternative splicing</keyword>
<keyword id="KW-0130">Cell adhesion</keyword>
<keyword id="KW-0131">Cell cycle</keyword>
<keyword id="KW-0132">Cell division</keyword>
<keyword id="KW-0965">Cell junction</keyword>
<keyword id="KW-1003">Cell membrane</keyword>
<keyword id="KW-0966">Cell projection</keyword>
<keyword id="KW-0963">Cytoplasm</keyword>
<keyword id="KW-0206">Cytoskeleton</keyword>
<keyword id="KW-0333">Golgi apparatus</keyword>
<keyword id="KW-0341">Growth regulation</keyword>
<keyword id="KW-0472">Membrane</keyword>
<keyword id="KW-0498">Mitosis</keyword>
<keyword id="KW-0539">Nucleus</keyword>
<keyword id="KW-0597">Phosphoprotein</keyword>
<keyword id="KW-1267">Proteomics identification</keyword>
<keyword id="KW-1185">Reference proteome</keyword>
<keyword id="KW-0728">SH3 domain</keyword>
<keyword id="KW-0832">Ubl conjugation</keyword>
<feature type="chain" id="PRO_0000089328" description="Enhancer of filamentation 1">
    <location>
        <begin position="1"/>
        <end position="834"/>
    </location>
</feature>
<feature type="chain" id="PRO_0000296242" description="Enhancer of filamentation 1 p55">
    <location>
        <begin position="1"/>
        <end status="unknown"/>
    </location>
</feature>
<feature type="domain" description="SH3" evidence="3">
    <location>
        <begin position="3"/>
        <end position="65"/>
    </location>
</feature>
<feature type="region of interest" description="Required for interaction with ITCH" evidence="8">
    <location>
        <begin position="1"/>
        <end position="505"/>
    </location>
</feature>
<feature type="region of interest" description="Interacts strongly with spindle-regulatory protein D1M1">
    <location>
        <begin position="102"/>
        <end position="229"/>
    </location>
</feature>
<feature type="region of interest" description="Disordered" evidence="4">
    <location>
        <begin position="238"/>
        <end position="260"/>
    </location>
</feature>
<feature type="region of interest" description="Disordered" evidence="4">
    <location>
        <begin position="291"/>
        <end position="316"/>
    </location>
</feature>
<feature type="region of interest" description="Disordered" evidence="4">
    <location>
        <begin position="328"/>
        <end position="398"/>
    </location>
</feature>
<feature type="region of interest" description="Interacts with CTTN" evidence="16">
    <location>
        <begin position="351"/>
        <end position="834"/>
    </location>
</feature>
<feature type="region of interest" description="Disordered" evidence="4">
    <location>
        <begin position="560"/>
        <end position="623"/>
    </location>
</feature>
<feature type="region of interest" description="Required for interaction with PLK1" evidence="17">
    <location>
        <begin position="710"/>
        <end position="834"/>
    </location>
</feature>
<feature type="region of interest" description="Divergent helix-loop-helix motif">
    <location>
        <begin position="710"/>
        <end position="760"/>
    </location>
</feature>
<feature type="short sequence motif" description="Caspase cleavage related site" evidence="24">
    <location>
        <begin position="360"/>
        <end position="363"/>
    </location>
</feature>
<feature type="compositionally biased region" description="Polar residues" evidence="4">
    <location>
        <begin position="306"/>
        <end position="315"/>
    </location>
</feature>
<feature type="compositionally biased region" description="Basic and acidic residues" evidence="4">
    <location>
        <begin position="332"/>
        <end position="344"/>
    </location>
</feature>
<feature type="compositionally biased region" description="Low complexity" evidence="4">
    <location>
        <begin position="369"/>
        <end position="395"/>
    </location>
</feature>
<feature type="modified residue" description="Phosphotyrosine; by ABL1" evidence="15">
    <location>
        <position position="92"/>
    </location>
</feature>
<feature type="modified residue" description="Phosphotyrosine; by ABL1" evidence="15">
    <location>
        <position position="164"/>
    </location>
</feature>
<feature type="modified residue" description="Phosphotyrosine; by ABL1" evidence="15">
    <location>
        <position position="166"/>
    </location>
</feature>
<feature type="modified residue" description="Phosphotyrosine; by ABL1" evidence="15">
    <location>
        <position position="177"/>
    </location>
</feature>
<feature type="modified residue" description="Phosphotyrosine; by ABL1" evidence="15">
    <location>
        <position position="189"/>
    </location>
</feature>
<feature type="modified residue" description="Phosphotyrosine; by ABL1" evidence="15">
    <location>
        <position position="214"/>
    </location>
</feature>
<feature type="modified residue" description="Phosphotyrosine; by ABL1" evidence="15">
    <location>
        <position position="223"/>
    </location>
</feature>
<feature type="modified residue" description="Phosphotyrosine; by ABL1" evidence="15">
    <location>
        <position position="279"/>
    </location>
</feature>
<feature type="modified residue" description="Phosphoserine" evidence="14">
    <location>
        <position position="296"/>
    </location>
</feature>
<feature type="modified residue" description="Phosphotyrosine; by ABL1" evidence="15">
    <location>
        <position position="317"/>
    </location>
</feature>
<feature type="modified residue" description="Phosphoserine" evidence="14">
    <location>
        <position position="369"/>
    </location>
</feature>
<feature type="modified residue" description="Phosphoserine; by CSNK1D and CSNK1E" evidence="17">
    <location>
        <position position="780"/>
    </location>
</feature>
<feature type="modified residue" description="Phosphothreonine; by CSNK1E" evidence="17">
    <location>
        <position position="804"/>
    </location>
</feature>
<feature type="splice variant" id="VSP_044579" description="In isoform 3." evidence="27">
    <original>MKYK</original>
    <variation>MWTR</variation>
    <location>
        <begin position="1"/>
        <end position="4"/>
    </location>
</feature>
<feature type="splice variant" id="VSP_042835" description="In isoform 2." evidence="28">
    <original>ITPVRTGHGYVYEYPSRYQK</original>
    <variation>FQRDGQVSYFLVRASKQTSL</variation>
    <location>
        <begin position="155"/>
        <end position="174"/>
    </location>
</feature>
<feature type="splice variant" id="VSP_042836" description="In isoform 2." evidence="28">
    <location>
        <begin position="175"/>
        <end position="834"/>
    </location>
</feature>
<feature type="sequence variant" id="VAR_054082" description="In dbSNP:rs11546959.">
    <original>D</original>
    <variation>N</variation>
    <location>
        <position position="178"/>
    </location>
</feature>
<feature type="sequence variant" id="VAR_054083" description="In dbSNP:rs34184473.">
    <original>P</original>
    <variation>L</variation>
    <location>
        <position position="304"/>
    </location>
</feature>
<feature type="sequence variant" id="VAR_021857" description="In dbSNP:rs3734401.">
    <original>T</original>
    <variation>M</variation>
    <location>
        <position position="577"/>
    </location>
</feature>
<feature type="mutagenesis site" description="Abolishes the oxidation-mediated reduction in interaction with SMAD3." evidence="18">
    <original>C</original>
    <variation>A</variation>
    <location>
        <position position="18"/>
    </location>
</feature>
<feature type="mutagenesis site" description="No effect on interaction with PLK1." evidence="17">
    <original>S</original>
    <variation>A</variation>
    <location>
        <position position="735"/>
    </location>
</feature>
<feature type="mutagenesis site" description="Abolishes interaction with BCAR3." evidence="12">
    <original>L</original>
    <variation>D</variation>
    <location>
        <position position="751"/>
    </location>
</feature>
<feature type="mutagenesis site" description="No effect on interaction with BCAR3." evidence="12">
    <original>H</original>
    <variation>D</variation>
    <location>
        <position position="754"/>
    </location>
</feature>
<feature type="mutagenesis site" description="No effect on interaction with BCAR3." evidence="12">
    <original>F</original>
    <variation>D</variation>
    <location>
        <position position="758"/>
    </location>
</feature>
<feature type="mutagenesis site" description="Reduces interaction with PLK1. Reduces protein phosphorylation by CSNK1D; when associated with A-804." evidence="17">
    <original>S</original>
    <variation>A</variation>
    <location>
        <position position="780"/>
    </location>
</feature>
<feature type="mutagenesis site" description="Reduces interaction with PLK1. Abolishes interaction with PLK1; when associated with D-804." evidence="17">
    <original>S</original>
    <variation>D</variation>
    <location>
        <position position="780"/>
    </location>
</feature>
<feature type="mutagenesis site" description="Abolishes interaction with PLK1." evidence="17">
    <original>S</original>
    <variation>E</variation>
    <location>
        <position position="780"/>
    </location>
</feature>
<feature type="mutagenesis site" description="No effect on interaction with BCAR3." evidence="12">
    <original>M</original>
    <variation>D</variation>
    <location>
        <position position="796"/>
    </location>
</feature>
<feature type="mutagenesis site" description="Reduces interaction with PLK1. Reduces protein phosphorylation by CSNK1D; when associated with A-780." evidence="17">
    <original>T</original>
    <variation>A</variation>
    <location>
        <position position="804"/>
    </location>
</feature>
<feature type="mutagenesis site" description="Reduces interaction with PLK1. Abolishes interaction with PLK1; when associated with D-780." evidence="17">
    <original>T</original>
    <variation>D</variation>
    <location>
        <position position="804"/>
    </location>
</feature>
<feature type="mutagenesis site" description="No effect on interaction with PLK1." evidence="17">
    <original>T</original>
    <variation>E</variation>
    <location>
        <position position="804"/>
    </location>
</feature>
<feature type="sequence conflict" description="In Ref. 3; BAF85371." evidence="32" ref="3">
    <original>Q</original>
    <variation>R</variation>
    <location>
        <position position="139"/>
    </location>
</feature>
<feature type="helix" evidence="35">
    <location>
        <begin position="406"/>
        <end position="430"/>
    </location>
</feature>
<feature type="helix" evidence="35">
    <location>
        <begin position="438"/>
        <end position="442"/>
    </location>
</feature>
<feature type="turn" evidence="35">
    <location>
        <begin position="443"/>
        <end position="446"/>
    </location>
</feature>
<feature type="helix" evidence="35">
    <location>
        <begin position="447"/>
        <end position="473"/>
    </location>
</feature>
<feature type="helix" evidence="35">
    <location>
        <begin position="480"/>
        <end position="508"/>
    </location>
</feature>
<feature type="turn" evidence="35">
    <location>
        <begin position="509"/>
        <end position="511"/>
    </location>
</feature>
<feature type="helix" evidence="35">
    <location>
        <begin position="513"/>
        <end position="516"/>
    </location>
</feature>
<feature type="helix" evidence="35">
    <location>
        <begin position="527"/>
        <end position="535"/>
    </location>
</feature>
<feature type="helix" evidence="35">
    <location>
        <begin position="538"/>
        <end position="551"/>
    </location>
</feature>
<feature type="helix" evidence="35">
    <location>
        <begin position="553"/>
        <end position="556"/>
    </location>
</feature>
<gene>
    <name evidence="33" type="primary">NEDD9</name>
    <name evidence="26" type="synonym">CASL</name>
</gene>
<sequence length="834" mass="92861">MKYKNLMARALYDNVPECAEELAFRKGDILTVIEQNTGGLEGWWLCSLHGRQGIVPGNRVKLLIGPMQETASSHEQPASGLMQQTFGQQKLYQVPNPQAAPRDTIYQVPPSYQNQGIYQVPTGHGTQEQEVYQVPPSVQRSIGGTSGPHVGKKVITPVRTGHGYVYEYPSRYQKDVYDIPPSHTTQGVYDIPPSSAKGPVFSVPVGEIKPQGVYDIPPTKGVYAIPPSACRDEAGLREKDYDFPPPMRQAGRPDLRPEGVYDIPPTCTKPAGKDLHVKYNCDIPGAAEPVARRHQSLSPNHPPPQLGQSVGSQNDAYDVPRGVQFLEPPAETSEKANPQERDGVYDVPLHNPPDAKGSRDLVDGINRLSFSSTGSTRSNMSTSSTSSKESSLSASPAQDKRLFLDPDTAIERLQRLQQALEMGVSSLMALVTTDWRCYGYMERHINEIRTAVDKVELFLKEYLHFVKGAVANAACLPELILHNKMKRELQRVEDSHQILSQTSHDLNECSWSLNILAINKPQNKCDDLDRFVMVAKTVPDDAKQLTTTINTNAEALFRPGPGSLHLKNGPESIMNSTEYPHGGSQGQLLHPGDHKAQAHNKALPPGLSKEQAPDCSSSDGSERSWMDDYDYVHLQGKEEFERQQKELLEKENIMKQNKMQLEHHQLSQFQLLEQEITKPVENDISKWKPSQSLPTTNSGVSAQDRQLLCFYYDQCETHFISLLNAIDALFSCVSSAQPPRIFVAHSKFVILSAHKLVFIGDTLTRQVTAQDIRNKVMNSSNQLCEQLKTIVMATKMAALHYPSTTALQEMVHQVTDLSRNAQLFKRSLLEMATF</sequence>
<evidence type="ECO:0000250" key="1">
    <source>
        <dbReference type="UniProtKB" id="A0A8I3PDQ1"/>
    </source>
</evidence>
<evidence type="ECO:0000250" key="2">
    <source>
        <dbReference type="UniProtKB" id="O35177"/>
    </source>
</evidence>
<evidence type="ECO:0000255" key="3">
    <source>
        <dbReference type="PROSITE-ProRule" id="PRU00192"/>
    </source>
</evidence>
<evidence type="ECO:0000256" key="4">
    <source>
        <dbReference type="SAM" id="MobiDB-lite"/>
    </source>
</evidence>
<evidence type="ECO:0000269" key="5">
    <source>
    </source>
</evidence>
<evidence type="ECO:0000269" key="6">
    <source>
    </source>
</evidence>
<evidence type="ECO:0000269" key="7">
    <source>
    </source>
</evidence>
<evidence type="ECO:0000269" key="8">
    <source>
    </source>
</evidence>
<evidence type="ECO:0000269" key="9">
    <source>
    </source>
</evidence>
<evidence type="ECO:0000269" key="10">
    <source>
    </source>
</evidence>
<evidence type="ECO:0000269" key="11">
    <source>
    </source>
</evidence>
<evidence type="ECO:0000269" key="12">
    <source>
    </source>
</evidence>
<evidence type="ECO:0000269" key="13">
    <source>
    </source>
</evidence>
<evidence type="ECO:0000269" key="14">
    <source>
    </source>
</evidence>
<evidence type="ECO:0000269" key="15">
    <source>
    </source>
</evidence>
<evidence type="ECO:0000269" key="16">
    <source>
    </source>
</evidence>
<evidence type="ECO:0000269" key="17">
    <source>
    </source>
</evidence>
<evidence type="ECO:0000269" key="18">
    <source>
    </source>
</evidence>
<evidence type="ECO:0000269" key="19">
    <source>
    </source>
</evidence>
<evidence type="ECO:0000269" key="20">
    <source>
    </source>
</evidence>
<evidence type="ECO:0000269" key="21">
    <source>
    </source>
</evidence>
<evidence type="ECO:0000269" key="22">
    <source>
    </source>
</evidence>
<evidence type="ECO:0000269" key="23">
    <source>
    </source>
</evidence>
<evidence type="ECO:0000269" key="24">
    <source>
    </source>
</evidence>
<evidence type="ECO:0000303" key="25">
    <source>
    </source>
</evidence>
<evidence type="ECO:0000303" key="26">
    <source>
    </source>
</evidence>
<evidence type="ECO:0000303" key="27">
    <source>
    </source>
</evidence>
<evidence type="ECO:0000303" key="28">
    <source>
    </source>
</evidence>
<evidence type="ECO:0000303" key="29">
    <source>
    </source>
</evidence>
<evidence type="ECO:0000303" key="30">
    <source>
    </source>
</evidence>
<evidence type="ECO:0000303" key="31">
    <source>
    </source>
</evidence>
<evidence type="ECO:0000305" key="32"/>
<evidence type="ECO:0000312" key="33">
    <source>
        <dbReference type="HGNC" id="HGNC:7733"/>
    </source>
</evidence>
<evidence type="ECO:0007744" key="34">
    <source>
        <dbReference type="PDB" id="5X3S"/>
    </source>
</evidence>
<evidence type="ECO:0007829" key="35">
    <source>
        <dbReference type="PDB" id="2L81"/>
    </source>
</evidence>
<organism>
    <name type="scientific">Homo sapiens</name>
    <name type="common">Human</name>
    <dbReference type="NCBI Taxonomy" id="9606"/>
    <lineage>
        <taxon>Eukaryota</taxon>
        <taxon>Metazoa</taxon>
        <taxon>Chordata</taxon>
        <taxon>Craniata</taxon>
        <taxon>Vertebrata</taxon>
        <taxon>Euteleostomi</taxon>
        <taxon>Mammalia</taxon>
        <taxon>Eutheria</taxon>
        <taxon>Euarchontoglires</taxon>
        <taxon>Primates</taxon>
        <taxon>Haplorrhini</taxon>
        <taxon>Catarrhini</taxon>
        <taxon>Hominidae</taxon>
        <taxon>Homo</taxon>
    </lineage>
</organism>
<name>CASL_HUMAN</name>
<reference key="1">
    <citation type="journal article" date="1996" name="Mol. Cell. Biol.">
        <title>Human enhancer of filamentation 1, a novel p130cas-like docking protein, associates with focal adhesion kinase and induces pseudohyphal growth in Saccharomyces cerevisiae.</title>
        <authorList>
            <person name="Law S.F."/>
            <person name="Estojak J."/>
            <person name="Wang B."/>
            <person name="Mysliwiec T."/>
            <person name="Kruh G."/>
            <person name="Golemis E.A."/>
        </authorList>
    </citation>
    <scope>NUCLEOTIDE SEQUENCE [MRNA] (ISOFORM 1)</scope>
    <scope>INTERACTION WITH PTK2</scope>
    <scope>SUBCELLULAR LOCATION</scope>
    <scope>DOMAIN</scope>
    <source>
        <tissue>Placenta</tissue>
    </source>
</reference>
<reference key="2">
    <citation type="journal article" date="1996" name="J. Exp. Med.">
        <title>Structure and function of Cas-L, a 105-kD Crk-associated substrate-related protein that is involved in beta 1 integrin-mediated signaling in lymphocytes.</title>
        <authorList>
            <person name="Minegishi M."/>
            <person name="Tachibana K."/>
            <person name="Sato T."/>
            <person name="Iwata S."/>
            <person name="Nojima Y."/>
            <person name="Morimoto C."/>
        </authorList>
    </citation>
    <scope>NUCLEOTIDE SEQUENCE [MRNA] (ISOFORM 1)</scope>
    <scope>INTERACTION WITH PTK2</scope>
    <source>
        <tissue>Lymphoma</tissue>
    </source>
</reference>
<reference key="3">
    <citation type="journal article" date="2004" name="Nat. Genet.">
        <title>Complete sequencing and characterization of 21,243 full-length human cDNAs.</title>
        <authorList>
            <person name="Ota T."/>
            <person name="Suzuki Y."/>
            <person name="Nishikawa T."/>
            <person name="Otsuki T."/>
            <person name="Sugiyama T."/>
            <person name="Irie R."/>
            <person name="Wakamatsu A."/>
            <person name="Hayashi K."/>
            <person name="Sato H."/>
            <person name="Nagai K."/>
            <person name="Kimura K."/>
            <person name="Makita H."/>
            <person name="Sekine M."/>
            <person name="Obayashi M."/>
            <person name="Nishi T."/>
            <person name="Shibahara T."/>
            <person name="Tanaka T."/>
            <person name="Ishii S."/>
            <person name="Yamamoto J."/>
            <person name="Saito K."/>
            <person name="Kawai Y."/>
            <person name="Isono Y."/>
            <person name="Nakamura Y."/>
            <person name="Nagahari K."/>
            <person name="Murakami K."/>
            <person name="Yasuda T."/>
            <person name="Iwayanagi T."/>
            <person name="Wagatsuma M."/>
            <person name="Shiratori A."/>
            <person name="Sudo H."/>
            <person name="Hosoiri T."/>
            <person name="Kaku Y."/>
            <person name="Kodaira H."/>
            <person name="Kondo H."/>
            <person name="Sugawara M."/>
            <person name="Takahashi M."/>
            <person name="Kanda K."/>
            <person name="Yokoi T."/>
            <person name="Furuya T."/>
            <person name="Kikkawa E."/>
            <person name="Omura Y."/>
            <person name="Abe K."/>
            <person name="Kamihara K."/>
            <person name="Katsuta N."/>
            <person name="Sato K."/>
            <person name="Tanikawa M."/>
            <person name="Yamazaki M."/>
            <person name="Ninomiya K."/>
            <person name="Ishibashi T."/>
            <person name="Yamashita H."/>
            <person name="Murakawa K."/>
            <person name="Fujimori K."/>
            <person name="Tanai H."/>
            <person name="Kimata M."/>
            <person name="Watanabe M."/>
            <person name="Hiraoka S."/>
            <person name="Chiba Y."/>
            <person name="Ishida S."/>
            <person name="Ono Y."/>
            <person name="Takiguchi S."/>
            <person name="Watanabe S."/>
            <person name="Yosida M."/>
            <person name="Hotuta T."/>
            <person name="Kusano J."/>
            <person name="Kanehori K."/>
            <person name="Takahashi-Fujii A."/>
            <person name="Hara H."/>
            <person name="Tanase T.-O."/>
            <person name="Nomura Y."/>
            <person name="Togiya S."/>
            <person name="Komai F."/>
            <person name="Hara R."/>
            <person name="Takeuchi K."/>
            <person name="Arita M."/>
            <person name="Imose N."/>
            <person name="Musashino K."/>
            <person name="Yuuki H."/>
            <person name="Oshima A."/>
            <person name="Sasaki N."/>
            <person name="Aotsuka S."/>
            <person name="Yoshikawa Y."/>
            <person name="Matsunawa H."/>
            <person name="Ichihara T."/>
            <person name="Shiohata N."/>
            <person name="Sano S."/>
            <person name="Moriya S."/>
            <person name="Momiyama H."/>
            <person name="Satoh N."/>
            <person name="Takami S."/>
            <person name="Terashima Y."/>
            <person name="Suzuki O."/>
            <person name="Nakagawa S."/>
            <person name="Senoh A."/>
            <person name="Mizoguchi H."/>
            <person name="Goto Y."/>
            <person name="Shimizu F."/>
            <person name="Wakebe H."/>
            <person name="Hishigaki H."/>
            <person name="Watanabe T."/>
            <person name="Sugiyama A."/>
            <person name="Takemoto M."/>
            <person name="Kawakami B."/>
            <person name="Yamazaki M."/>
            <person name="Watanabe K."/>
            <person name="Kumagai A."/>
            <person name="Itakura S."/>
            <person name="Fukuzumi Y."/>
            <person name="Fujimori Y."/>
            <person name="Komiyama M."/>
            <person name="Tashiro H."/>
            <person name="Tanigami A."/>
            <person name="Fujiwara T."/>
            <person name="Ono T."/>
            <person name="Yamada K."/>
            <person name="Fujii Y."/>
            <person name="Ozaki K."/>
            <person name="Hirao M."/>
            <person name="Ohmori Y."/>
            <person name="Kawabata A."/>
            <person name="Hikiji T."/>
            <person name="Kobatake N."/>
            <person name="Inagaki H."/>
            <person name="Ikema Y."/>
            <person name="Okamoto S."/>
            <person name="Okitani R."/>
            <person name="Kawakami T."/>
            <person name="Noguchi S."/>
            <person name="Itoh T."/>
            <person name="Shigeta K."/>
            <person name="Senba T."/>
            <person name="Matsumura K."/>
            <person name="Nakajima Y."/>
            <person name="Mizuno T."/>
            <person name="Morinaga M."/>
            <person name="Sasaki M."/>
            <person name="Togashi T."/>
            <person name="Oyama M."/>
            <person name="Hata H."/>
            <person name="Watanabe M."/>
            <person name="Komatsu T."/>
            <person name="Mizushima-Sugano J."/>
            <person name="Satoh T."/>
            <person name="Shirai Y."/>
            <person name="Takahashi Y."/>
            <person name="Nakagawa K."/>
            <person name="Okumura K."/>
            <person name="Nagase T."/>
            <person name="Nomura N."/>
            <person name="Kikuchi H."/>
            <person name="Masuho Y."/>
            <person name="Yamashita R."/>
            <person name="Nakai K."/>
            <person name="Yada T."/>
            <person name="Nakamura Y."/>
            <person name="Ohara O."/>
            <person name="Isogai T."/>
            <person name="Sugano S."/>
        </authorList>
    </citation>
    <scope>NUCLEOTIDE SEQUENCE [LARGE SCALE MRNA] (ISOFORM 3)</scope>
    <source>
        <tissue>Thymus</tissue>
    </source>
</reference>
<reference key="4">
    <citation type="journal article" date="2003" name="Nature">
        <title>The DNA sequence and analysis of human chromosome 6.</title>
        <authorList>
            <person name="Mungall A.J."/>
            <person name="Palmer S.A."/>
            <person name="Sims S.K."/>
            <person name="Edwards C.A."/>
            <person name="Ashurst J.L."/>
            <person name="Wilming L."/>
            <person name="Jones M.C."/>
            <person name="Horton R."/>
            <person name="Hunt S.E."/>
            <person name="Scott C.E."/>
            <person name="Gilbert J.G.R."/>
            <person name="Clamp M.E."/>
            <person name="Bethel G."/>
            <person name="Milne S."/>
            <person name="Ainscough R."/>
            <person name="Almeida J.P."/>
            <person name="Ambrose K.D."/>
            <person name="Andrews T.D."/>
            <person name="Ashwell R.I.S."/>
            <person name="Babbage A.K."/>
            <person name="Bagguley C.L."/>
            <person name="Bailey J."/>
            <person name="Banerjee R."/>
            <person name="Barker D.J."/>
            <person name="Barlow K.F."/>
            <person name="Bates K."/>
            <person name="Beare D.M."/>
            <person name="Beasley H."/>
            <person name="Beasley O."/>
            <person name="Bird C.P."/>
            <person name="Blakey S.E."/>
            <person name="Bray-Allen S."/>
            <person name="Brook J."/>
            <person name="Brown A.J."/>
            <person name="Brown J.Y."/>
            <person name="Burford D.C."/>
            <person name="Burrill W."/>
            <person name="Burton J."/>
            <person name="Carder C."/>
            <person name="Carter N.P."/>
            <person name="Chapman J.C."/>
            <person name="Clark S.Y."/>
            <person name="Clark G."/>
            <person name="Clee C.M."/>
            <person name="Clegg S."/>
            <person name="Cobley V."/>
            <person name="Collier R.E."/>
            <person name="Collins J.E."/>
            <person name="Colman L.K."/>
            <person name="Corby N.R."/>
            <person name="Coville G.J."/>
            <person name="Culley K.M."/>
            <person name="Dhami P."/>
            <person name="Davies J."/>
            <person name="Dunn M."/>
            <person name="Earthrowl M.E."/>
            <person name="Ellington A.E."/>
            <person name="Evans K.A."/>
            <person name="Faulkner L."/>
            <person name="Francis M.D."/>
            <person name="Frankish A."/>
            <person name="Frankland J."/>
            <person name="French L."/>
            <person name="Garner P."/>
            <person name="Garnett J."/>
            <person name="Ghori M.J."/>
            <person name="Gilby L.M."/>
            <person name="Gillson C.J."/>
            <person name="Glithero R.J."/>
            <person name="Grafham D.V."/>
            <person name="Grant M."/>
            <person name="Gribble S."/>
            <person name="Griffiths C."/>
            <person name="Griffiths M.N.D."/>
            <person name="Hall R."/>
            <person name="Halls K.S."/>
            <person name="Hammond S."/>
            <person name="Harley J.L."/>
            <person name="Hart E.A."/>
            <person name="Heath P.D."/>
            <person name="Heathcott R."/>
            <person name="Holmes S.J."/>
            <person name="Howden P.J."/>
            <person name="Howe K.L."/>
            <person name="Howell G.R."/>
            <person name="Huckle E."/>
            <person name="Humphray S.J."/>
            <person name="Humphries M.D."/>
            <person name="Hunt A.R."/>
            <person name="Johnson C.M."/>
            <person name="Joy A.A."/>
            <person name="Kay M."/>
            <person name="Keenan S.J."/>
            <person name="Kimberley A.M."/>
            <person name="King A."/>
            <person name="Laird G.K."/>
            <person name="Langford C."/>
            <person name="Lawlor S."/>
            <person name="Leongamornlert D.A."/>
            <person name="Leversha M."/>
            <person name="Lloyd C.R."/>
            <person name="Lloyd D.M."/>
            <person name="Loveland J.E."/>
            <person name="Lovell J."/>
            <person name="Martin S."/>
            <person name="Mashreghi-Mohammadi M."/>
            <person name="Maslen G.L."/>
            <person name="Matthews L."/>
            <person name="McCann O.T."/>
            <person name="McLaren S.J."/>
            <person name="McLay K."/>
            <person name="McMurray A."/>
            <person name="Moore M.J.F."/>
            <person name="Mullikin J.C."/>
            <person name="Niblett D."/>
            <person name="Nickerson T."/>
            <person name="Novik K.L."/>
            <person name="Oliver K."/>
            <person name="Overton-Larty E.K."/>
            <person name="Parker A."/>
            <person name="Patel R."/>
            <person name="Pearce A.V."/>
            <person name="Peck A.I."/>
            <person name="Phillimore B.J.C.T."/>
            <person name="Phillips S."/>
            <person name="Plumb R.W."/>
            <person name="Porter K.M."/>
            <person name="Ramsey Y."/>
            <person name="Ranby S.A."/>
            <person name="Rice C.M."/>
            <person name="Ross M.T."/>
            <person name="Searle S.M."/>
            <person name="Sehra H.K."/>
            <person name="Sheridan E."/>
            <person name="Skuce C.D."/>
            <person name="Smith S."/>
            <person name="Smith M."/>
            <person name="Spraggon L."/>
            <person name="Squares S.L."/>
            <person name="Steward C.A."/>
            <person name="Sycamore N."/>
            <person name="Tamlyn-Hall G."/>
            <person name="Tester J."/>
            <person name="Theaker A.J."/>
            <person name="Thomas D.W."/>
            <person name="Thorpe A."/>
            <person name="Tracey A."/>
            <person name="Tromans A."/>
            <person name="Tubby B."/>
            <person name="Wall M."/>
            <person name="Wallis J.M."/>
            <person name="West A.P."/>
            <person name="White S.S."/>
            <person name="Whitehead S.L."/>
            <person name="Whittaker H."/>
            <person name="Wild A."/>
            <person name="Willey D.J."/>
            <person name="Wilmer T.E."/>
            <person name="Wood J.M."/>
            <person name="Wray P.W."/>
            <person name="Wyatt J.C."/>
            <person name="Young L."/>
            <person name="Younger R.M."/>
            <person name="Bentley D.R."/>
            <person name="Coulson A."/>
            <person name="Durbin R.M."/>
            <person name="Hubbard T."/>
            <person name="Sulston J.E."/>
            <person name="Dunham I."/>
            <person name="Rogers J."/>
            <person name="Beck S."/>
        </authorList>
    </citation>
    <scope>NUCLEOTIDE SEQUENCE [LARGE SCALE GENOMIC DNA]</scope>
</reference>
<reference key="5">
    <citation type="submission" date="2005-07" db="EMBL/GenBank/DDBJ databases">
        <authorList>
            <person name="Mural R.J."/>
            <person name="Istrail S."/>
            <person name="Sutton G.G."/>
            <person name="Florea L."/>
            <person name="Halpern A.L."/>
            <person name="Mobarry C.M."/>
            <person name="Lippert R."/>
            <person name="Walenz B."/>
            <person name="Shatkay H."/>
            <person name="Dew I."/>
            <person name="Miller J.R."/>
            <person name="Flanigan M.J."/>
            <person name="Edwards N.J."/>
            <person name="Bolanos R."/>
            <person name="Fasulo D."/>
            <person name="Halldorsson B.V."/>
            <person name="Hannenhalli S."/>
            <person name="Turner R."/>
            <person name="Yooseph S."/>
            <person name="Lu F."/>
            <person name="Nusskern D.R."/>
            <person name="Shue B.C."/>
            <person name="Zheng X.H."/>
            <person name="Zhong F."/>
            <person name="Delcher A.L."/>
            <person name="Huson D.H."/>
            <person name="Kravitz S.A."/>
            <person name="Mouchard L."/>
            <person name="Reinert K."/>
            <person name="Remington K.A."/>
            <person name="Clark A.G."/>
            <person name="Waterman M.S."/>
            <person name="Eichler E.E."/>
            <person name="Adams M.D."/>
            <person name="Hunkapiller M.W."/>
            <person name="Myers E.W."/>
            <person name="Venter J.C."/>
        </authorList>
    </citation>
    <scope>NUCLEOTIDE SEQUENCE [LARGE SCALE GENOMIC DNA]</scope>
</reference>
<reference key="6">
    <citation type="journal article" date="2004" name="Genome Res.">
        <title>The status, quality, and expansion of the NIH full-length cDNA project: the Mammalian Gene Collection (MGC).</title>
        <authorList>
            <consortium name="The MGC Project Team"/>
        </authorList>
    </citation>
    <scope>NUCLEOTIDE SEQUENCE [LARGE SCALE MRNA] (ISOFORMS 1 AND 2)</scope>
    <source>
        <tissue>Brain</tissue>
        <tissue>Lung</tissue>
    </source>
</reference>
<reference key="7">
    <citation type="journal article" date="1997" name="J. Biol. Chem.">
        <title>Involvement of p130(Cas) and p105(HEF1), a novel Cas-like docking protein, in a cytoskeleton-dependent signaling pathway initiated by ligation of integrin or antigen receptor on human B cells.</title>
        <authorList>
            <person name="Manie S.N."/>
            <person name="Beck A.R.P."/>
            <person name="Astier A."/>
            <person name="Law S.F."/>
            <person name="Canty T."/>
            <person name="Hirai H."/>
            <person name="Druker B.J."/>
            <person name="Avraham H."/>
            <person name="Haghayeghi N."/>
            <person name="Sattler M."/>
            <person name="Salgia R."/>
            <person name="Griffin J.D."/>
            <person name="Golemis E.A."/>
            <person name="Freedman A.S."/>
        </authorList>
    </citation>
    <scope>FUNCTION</scope>
    <scope>INTERACTION WITH CRKL AND PTK2B</scope>
    <scope>TISSUE SPECIFICITY</scope>
    <scope>PHOSPHORYLATION</scope>
    <scope>INCREASED TYROSINE PHOSPHORYLATION BY LIGATION OF INTEGRIN-B1 AND BCR</scope>
    <scope>DOMAIN</scope>
</reference>
<reference key="8">
    <citation type="journal article" date="1997" name="J. Biol. Chem.">
        <title>Tyrosine phosphorylation of Crk-associated substrates by focal adhesion kinase. A putative mechanism for the integrin-mediated tyrosine phosphorylation of Crk-associated substrates.</title>
        <authorList>
            <person name="Tachibana K."/>
            <person name="Urano T."/>
            <person name="Fujita H."/>
            <person name="Ohashi Y."/>
            <person name="Kamiguchi K."/>
            <person name="Iwata S."/>
            <person name="Hirai H."/>
            <person name="Morimoto C."/>
        </authorList>
    </citation>
    <scope>INTERACTION WITH PTK2; LYN AND FYN</scope>
    <scope>PHOSPHORYLATION AT TYROSINE RESIDUES BY PTK2</scope>
</reference>
<reference key="9">
    <citation type="journal article" date="1998" name="Mol. Cell. Biol.">
        <title>Cell cycle-regulated processing of HEF1 to multiple protein forms differentially targeted to multiple subcellular compartments.</title>
        <authorList>
            <person name="Law S.F."/>
            <person name="Zhang Y.-Z."/>
            <person name="Klein-Szanto A.J.P."/>
            <person name="Golemis E.A."/>
        </authorList>
    </citation>
    <scope>SUBUNIT</scope>
    <scope>SUBCELLULAR LOCATION</scope>
    <scope>TISSUE SPECIFICITY</scope>
    <scope>DEVELOPMENTAL STAGE</scope>
    <scope>PROTEOLYTIC PROCESSING</scope>
</reference>
<reference key="10">
    <citation type="journal article" date="1998" name="J. Biol. Chem.">
        <title>T cell receptor-mediated tyrosine phosphorylation of Cas-L, a 105-kDa Crk-associated substrate-related protein, and its association of Crk and C3G.</title>
        <authorList>
            <person name="Ohashi Y."/>
            <person name="Tachibana K."/>
            <person name="Kamiguchi K."/>
            <person name="Fujita H."/>
            <person name="Morimoto C."/>
        </authorList>
    </citation>
    <scope>TISSUE SPECIFICITY</scope>
    <scope>PHOSPHORYLATION AT TYROSINE RESIDUES UPON CD3 CROSS-LINKING</scope>
</reference>
<reference key="11">
    <citation type="journal article" date="1999" name="Int. J. Cancer">
        <title>Antigens recognized by autologous antibody in patients with renal-cell carcinoma.</title>
        <authorList>
            <person name="Scanlan M.J."/>
            <person name="Gordan J.D."/>
            <person name="Williamson B."/>
            <person name="Stockert E."/>
            <person name="Bander N.H."/>
            <person name="Jongeneel C.V."/>
            <person name="Gure A.O."/>
            <person name="Jaeger D."/>
            <person name="Jaeger E."/>
            <person name="Knuth A."/>
            <person name="Chen Y.-T."/>
            <person name="Old L.J."/>
        </authorList>
    </citation>
    <scope>IDENTIFICATION AS A RENAL CANCER ANTIGEN</scope>
    <source>
        <tissue>Renal cell carcinoma</tissue>
    </source>
</reference>
<reference key="12">
    <citation type="journal article" date="1999" name="Exp. Cell Res.">
        <title>Dimerization of the docking/adaptor protein HEF1 via a carboxy-terminal helix-loop-helix domain.</title>
        <authorList>
            <person name="Law S.F."/>
            <person name="Zhang Y.-Z."/>
            <person name="Fashena S.J."/>
            <person name="Toby G."/>
            <person name="Estojak J."/>
            <person name="Golemis E.A."/>
        </authorList>
    </citation>
    <scope>SUBUNIT</scope>
    <scope>INTERACTION WITH BCAR1 AND ID2</scope>
    <scope>CHARACTERIZATION OF CARBOXY-TERMINAL DOMAIN</scope>
</reference>
<reference key="13">
    <citation type="journal article" date="2000" name="Gene">
        <title>Evidence that Dim1 associates with proteins involved in pre-mRNA splicing, and delineation of residues essential for Dim1 interactions with hnRNP F and Npw38/PQBP-1.</title>
        <authorList>
            <person name="Zhang Y.-Z."/>
            <person name="Lindblom T."/>
            <person name="Chang A."/>
            <person name="Sudol M."/>
            <person name="Sluder A.E."/>
            <person name="Golemis E.A."/>
        </authorList>
    </citation>
    <scope>INTERACTION WITH TXNL4</scope>
</reference>
<reference key="14">
    <citation type="journal article" date="2002" name="J. Biol. Chem.">
        <title>MICAL, a novel CasL interacting molecule, associates with vimentin.</title>
        <authorList>
            <person name="Suzuki T."/>
            <person name="Nakamoto T."/>
            <person name="Ogawa S."/>
            <person name="Seo S."/>
            <person name="Matsumura T."/>
            <person name="Tachibana K."/>
            <person name="Morimoto C."/>
            <person name="Hirai H."/>
        </authorList>
    </citation>
    <scope>INTERACTION WITH MICAL</scope>
    <scope>SUBCELLULAR LOCATION</scope>
</reference>
<reference key="15">
    <citation type="journal article" date="2003" name="Proc. Natl. Acad. Sci. U.S.A.">
        <title>Profiling of tyrosine phosphorylation pathways in human cells using mass spectrometry.</title>
        <authorList>
            <person name="Salomon A.R."/>
            <person name="Ficarro S.B."/>
            <person name="Brill L.M."/>
            <person name="Brinker A."/>
            <person name="Phung Q.T."/>
            <person name="Ericson C."/>
            <person name="Sauer K."/>
            <person name="Brock A."/>
            <person name="Horn D.M."/>
            <person name="Schultz P.G."/>
            <person name="Peters E.C."/>
        </authorList>
    </citation>
    <scope>IDENTIFICATION BY MASS SPECTROMETRY [LARGE SCALE ANALYSIS]</scope>
</reference>
<reference key="16">
    <citation type="journal article" date="2004" name="Anal. Chem.">
        <title>Robust phosphoproteomic profiling of tyrosine phosphorylation sites from human T cells using immobilized metal affinity chromatography and tandem mass spectrometry.</title>
        <authorList>
            <person name="Brill L.M."/>
            <person name="Salomon A.R."/>
            <person name="Ficarro S.B."/>
            <person name="Mukherji M."/>
            <person name="Stettler-Gill M."/>
            <person name="Peters E.C."/>
        </authorList>
    </citation>
    <scope>IDENTIFICATION BY MASS SPECTROMETRY [LARGE SCALE ANALYSIS]</scope>
    <source>
        <tissue>Leukemic T-cell</tissue>
    </source>
</reference>
<reference key="17">
    <citation type="journal article" date="2004" name="J. Biol. Chem.">
        <title>Atrophin-1-interacting protein 4/human Itch is a ubiquitin E3 ligase for human enhancer of filamentation 1 in transforming growth factor-beta signaling pathways.</title>
        <authorList>
            <person name="Feng L."/>
            <person name="Guedes S."/>
            <person name="Wang T."/>
        </authorList>
    </citation>
    <scope>IDENTIFICATION IN A COMPLEX WITH SMAD3 AND ITCH</scope>
    <scope>INTERACTION WITH SMAD3 AND ITCH</scope>
    <scope>UBIQUITINATION</scope>
</reference>
<reference key="18">
    <citation type="journal article" date="2006" name="Immunity">
        <title>The hematopoietic isoform of Cas-Hef1-associated signal transducer regulates chemokine-induced inside-out signaling and T cell trafficking.</title>
        <authorList>
            <person name="Regelmann A.G."/>
            <person name="Danzl N.M."/>
            <person name="Wanjalla C."/>
            <person name="Alexandropoulos K."/>
        </authorList>
    </citation>
    <scope>FUNCTION</scope>
</reference>
<reference key="19">
    <citation type="journal article" date="2006" name="Mol. Biol. Cell">
        <title>Deregulation of HEF1 impairs M-phase progression by disrupting the RhoA activation cycle.</title>
        <authorList>
            <person name="Dadke D."/>
            <person name="Jarnik M."/>
            <person name="Pugacheva E.N."/>
            <person name="Singh M.K."/>
            <person name="Golemis E.A."/>
        </authorList>
    </citation>
    <scope>INTERACTION WITH ECT2</scope>
    <scope>SUBCELLULAR LOCATION</scope>
</reference>
<reference key="20">
    <citation type="journal article" date="2007" name="Cell">
        <title>HEF1-dependent Aurora A activation induces disassembly of the primary cilium.</title>
        <authorList>
            <person name="Pugacheva E.N."/>
            <person name="Jablonski S.A."/>
            <person name="Hartman T.R."/>
            <person name="Henske E.P."/>
            <person name="Golemis E.A."/>
        </authorList>
    </citation>
    <scope>FUNCTION</scope>
    <scope>SUBCELLULAR LOCATION</scope>
</reference>
<reference key="21">
    <citation type="journal article" date="2009" name="Biochem. Biophys. Res. Commun.">
        <title>SHP-2 inhibits tyrosine phosphorylation of Cas-L and regulates cell migration.</title>
        <authorList>
            <person name="Yo K."/>
            <person name="Iwata S."/>
            <person name="Hashizume Y."/>
            <person name="Kondo S."/>
            <person name="Nomura S."/>
            <person name="Hosono O."/>
            <person name="Kawasaki H."/>
            <person name="Tanaka H."/>
            <person name="Dang N.H."/>
            <person name="Morimoto C."/>
        </authorList>
    </citation>
    <scope>INTERACTION WITH PTPN11</scope>
    <scope>SUBCELLULAR LOCATION</scope>
</reference>
<reference key="22">
    <citation type="journal article" date="2009" name="Biochem. Pharmacol.">
        <title>Phosphorylation of human enhancer of filamentation (HEF1) on serine 369 induces its proteasomal degradation.</title>
        <authorList>
            <person name="Hivert V."/>
            <person name="Pierre J."/>
            <person name="Raingeaud J."/>
        </authorList>
    </citation>
    <scope>PHOSPHORYLATION AT SER-296 AND SER-369</scope>
</reference>
<reference key="23">
    <citation type="journal article" date="2009" name="J. Mol. Biol.">
        <title>Structural insights into the association between BCAR3 and Cas family members, an atypical complex implicated in anti-oestrogen resistance.</title>
        <authorList>
            <person name="Garron M.L."/>
            <person name="Arsenieva D."/>
            <person name="Zhong J."/>
            <person name="Bloom A.B."/>
            <person name="Lerner A."/>
            <person name="O'Neill G.M."/>
            <person name="Arold S.T."/>
        </authorList>
    </citation>
    <scope>INTERACTION WITH BCAR3</scope>
    <scope>SUBCELLULAR LOCATION</scope>
    <scope>MUTAGENESIS OF LEU-751; HIS-754; PHE-758 AND MET-796</scope>
</reference>
<reference key="24">
    <citation type="journal article" date="2012" name="Proc. Natl. Acad. Sci. U.S.A.">
        <title>N-terminal acetylome analyses and functional insights of the N-terminal acetyltransferase NatB.</title>
        <authorList>
            <person name="Van Damme P."/>
            <person name="Lasa M."/>
            <person name="Polevoda B."/>
            <person name="Gazquez C."/>
            <person name="Elosegui-Artola A."/>
            <person name="Kim D.S."/>
            <person name="De Juan-Pardo E."/>
            <person name="Demeyer K."/>
            <person name="Hole K."/>
            <person name="Larrea E."/>
            <person name="Timmerman E."/>
            <person name="Prieto J."/>
            <person name="Arnesen T."/>
            <person name="Sherman F."/>
            <person name="Gevaert K."/>
            <person name="Aldabe R."/>
        </authorList>
    </citation>
    <scope>IDENTIFICATION BY MASS SPECTROMETRY [LARGE SCALE ANALYSIS]</scope>
</reference>
<reference key="25">
    <citation type="journal article" date="2012" name="Sci. Signal.">
        <title>Abl family kinases modulate T cell-mediated inflammation and chemokine-induced migration through the adaptor HEF1 and the GTPase Rap1.</title>
        <authorList>
            <person name="Gu J.J."/>
            <person name="Lavau C.P."/>
            <person name="Pugacheva E."/>
            <person name="Soderblom E.J."/>
            <person name="Moseley M.A."/>
            <person name="Pendergast A.M."/>
        </authorList>
    </citation>
    <scope>INTERACTION WITH ABL1</scope>
    <scope>PHOSPHORYLATION AT TYR-92; TYR-164; TYR-166; TYR-177; TYR-189; TYR-214; TYR-223; TYR-279 AND TYR-317</scope>
</reference>
<reference key="26">
    <citation type="journal article" date="2014" name="Mol. Cancer Res.">
        <title>NEDD9 regulates actin dynamics through cortactin deacetylation in an AURKA/HDAC6-dependent manner.</title>
        <authorList>
            <person name="Kozyreva V.K."/>
            <person name="McLaughlin S.L."/>
            <person name="Livengood R.H."/>
            <person name="Calkins R.A."/>
            <person name="Kelley L.C."/>
            <person name="Rajulapati A."/>
            <person name="Ice R.J."/>
            <person name="Smolkin M.B."/>
            <person name="Weed S.A."/>
            <person name="Pugacheva E.N."/>
        </authorList>
    </citation>
    <scope>FUNCTION</scope>
    <scope>IDENTIFICATION IN A COMPLEX WITH CTTN AND AURKA</scope>
    <scope>INTERACTION WITH CTTN</scope>
</reference>
<reference key="27">
    <citation type="journal article" date="2018" name="Sci. Transl. Med.">
        <title>NEDD9 targets COL3A1 to promote endothelial fibrosis and pulmonary arterial hypertension.</title>
        <authorList>
            <person name="Samokhin A.O."/>
            <person name="Stephens T."/>
            <person name="Wertheim B.M."/>
            <person name="Wang R.S."/>
            <person name="Vargas S.O."/>
            <person name="Yung L.M."/>
            <person name="Cao M."/>
            <person name="Brown M."/>
            <person name="Arons E."/>
            <person name="Dieffenbach P.B."/>
            <person name="Fewell J.G."/>
            <person name="Matar M."/>
            <person name="Bowman F.P."/>
            <person name="Haley K.J."/>
            <person name="Alba G.A."/>
            <person name="Marino S.M."/>
            <person name="Kumar R."/>
            <person name="Rosas I.O."/>
            <person name="Waxman A.B."/>
            <person name="Oldham W.M."/>
            <person name="Khanna D."/>
            <person name="Graham B.B."/>
            <person name="Seo S."/>
            <person name="Gladyshev V.N."/>
            <person name="Yu P.B."/>
            <person name="Fredenburgh L.E."/>
            <person name="Loscalzo J."/>
            <person name="Leopold J.A."/>
            <person name="Maron B.A."/>
        </authorList>
    </citation>
    <scope>INTERACTION WITH SMAD3 AND NKX2-5</scope>
    <scope>SUBCELLULAR LOCATION</scope>
    <scope>INDUCTION BY OXIDANT STRESS</scope>
    <scope>MUTAGENESIS OF CYS-18</scope>
</reference>
<reference key="28">
    <citation type="submission" date="2011-02" db="PDB data bank">
        <title>Northeast structural genomics consortium target HR5554A.</title>
        <authorList>
            <consortium name="Northeast structural genomics consortium (NESG)"/>
        </authorList>
    </citation>
    <scope>STRUCTURE BY NMR OF 399-563</scope>
</reference>
<reference evidence="34" key="29">
    <citation type="journal article" date="2018" name="J. Biol. Chem.">
        <title>Phosphorylation of human enhancer filamentation 1 (HEF1) stimulates interaction with Polo-like kinase 1 leading to HEF1 localization to focal adhesions.</title>
        <authorList>
            <person name="Lee K.H."/>
            <person name="Hwang J.A."/>
            <person name="Kim S.O."/>
            <person name="Kim J.H."/>
            <person name="Shin S.C."/>
            <person name="Kim E.E."/>
            <person name="Lee K.S."/>
            <person name="Rhee K."/>
            <person name="Jeon B.H."/>
            <person name="Bang J.K."/>
            <person name="Cha-Molstad H."/>
            <person name="Soung N.K."/>
            <person name="Jang J.H."/>
            <person name="Ko S.K."/>
            <person name="Lee H.G."/>
            <person name="Ahn J.S."/>
            <person name="Kwon Y.T."/>
            <person name="Kim B.Y."/>
        </authorList>
    </citation>
    <scope>X-RAY CRYSTALLOGRAPHY (2.90 ANGSTROMS) OF 799-809 IN COMPLEX WITH PLK1</scope>
    <scope>INTERACTION WITH PLK1</scope>
    <scope>SUBCELLULAR LOCATION</scope>
    <scope>PHOSPHORYLATION AT SER-780 AND THR-804</scope>
    <scope>MUTAGENESIS OF SER-735; SER-780 AND THR-804</scope>
</reference>
<accession>Q14511</accession>
<accession>A8K9G7</accession>
<accession>A8MSJ9</accession>
<accession>G5E9Y9</accession>
<accession>Q5T9R4</accession>
<accession>Q5XKI0</accession>
<comment type="function">
    <text evidence="1 2 10 11 16 21">Scaffolding protein which plays a central coordinating role for tyrosine-kinase-based signaling related to cell adhesion (PubMed:24574519). As a focal adhesion protein, plays a role in embryonic fibroblast migration (By similarity). May play an important role in integrin beta-1 or B cell antigen receptor (BCR) mediated signaling in B- and T-cells. Integrin beta-1 stimulation leads to recruitment of various proteins including CRKL and SHPTP2 to the tyrosine phosphorylated form (PubMed:9020138). Promotes adhesion and migration of lymphocytes; as a result required for the correct migration of lymphocytes to the spleen and other secondary lymphoid organs (PubMed:17174122). Plays a role in the organization of T-cell F-actin cortical cytoskeleton and the centralization of T-cell receptor microclusters at the immunological synapse (By similarity). Negatively regulates cilia outgrowth in polarized cysts (By similarity). Modulates cilia disassembly via activation of AURKA-mediated phosphorylation of HDAC6 and subsequent deacetylation of alpha-tubulin (PubMed:17604723). Positively regulates RANKL-induced osteoclastogenesis (By similarity). Required for the maintenance of hippocampal dendritic spines in the dentate gyrus and CA1 regions, thereby involved in spatial learning and memory (By similarity).</text>
</comment>
<comment type="subunit">
    <text evidence="1 2 5 6 7 8 9 12 13 15 16 17 18 19 20 21 22 24">Homodimer (PubMed:10502414, PubMed:9584194). Forms heterodimers with BCAR1/p130cas (PubMed:10502414). Forms complexes with PTK2B/RAFTK, adapter protein CRKL and LYN kinase (PubMed:9020138). Part of a complex composed of NEDD9, AURKA and CTTN; within the complex NEDD9 acts as a scaffold protein and is required for complex formation (PubMed:24574519). Part of a ternary complex composed of SMAD3, ITCH/AIP4 and NEDD9/HEF1; within the complex NEDD9/HEF1 interacts (via N-terminus) with ITCH/AIP4 (via WW domains); the complex mediates ubiquitination and proteasomal degradation of NEDD9/HEF1 (PubMed:15051726). Interacts with SMAD3; the interaction promotes NEDD9 ubiquitination and proteasomal degradation (PubMed:24574519). Interacts with ID2 (PubMed:10502414). Interacts with CTTN (via N-terminus) (PubMed:24574519). Interacts with MICAL (PubMed:11827972). Interacts with TXNL4/DIM1 (PubMed:11054566). Interacts with BCAR3 (via Ras-GEF domain) (PubMed:19103205). Interacts with SH2D3C isoform 1 and isoform 2 (By similarity). Interacts with ECT2 (PubMed:16394104). Interacts with PTPN11/SHP-2 (via SH2 domains); the interaction is enhanced when NEDD9/CAS-L is tyrosine phosphorylated (PubMed:19275884). Interacts (via C-terminus) with PLK1 (via polo box domains) (PubMed:29191835). Interacts with NKX2-5 (PubMed:29899023). Interacts with SMAD3; the interaction is inhibited by oxidation of NEDD9 (PubMed:15051726, PubMed:29899023). Interacts with NEDD9/HEF1; interaction is induced by CXCL12 promotion of ABL-mediated phosphorylation of NEDD9/HEF1 (PubMed:22810897). Interacts (via SH3 domain) with PTK2/FAK (PubMed:8668148, PubMed:8879209, PubMed:9360983). Interacts with FYN; in the presence of PTK2 (PubMed:9360983). Interacts with INPPL1/SHIP2 (By similarity).</text>
</comment>
<comment type="interaction">
    <interactant intactId="EBI-2108053">
        <id>Q14511</id>
    </interactant>
    <interactant intactId="EBI-744695">
        <id>Q8N9N5</id>
        <label>BANP</label>
    </interactant>
    <organismsDiffer>false</organismsDiffer>
    <experiments>4</experiments>
</comment>
<comment type="interaction">
    <interactant intactId="EBI-2108053">
        <id>Q14511</id>
    </interactant>
    <interactant intactId="EBI-702336">
        <id>O75815</id>
        <label>BCAR3</label>
    </interactant>
    <organismsDiffer>false</organismsDiffer>
    <experiments>5</experiments>
</comment>
<comment type="interaction">
    <interactant intactId="EBI-2108053">
        <id>Q14511</id>
    </interactant>
    <interactant intactId="EBI-8641936">
        <id>Q15742</id>
        <label>NAB2</label>
    </interactant>
    <organismsDiffer>false</organismsDiffer>
    <experiments>4</experiments>
</comment>
<comment type="interaction">
    <interactant intactId="EBI-2108053">
        <id>Q14511</id>
    </interactant>
    <interactant intactId="EBI-307386">
        <id>P25963</id>
        <label>NFKBIA</label>
    </interactant>
    <organismsDiffer>false</organismsDiffer>
    <experiments>3</experiments>
</comment>
<comment type="interaction">
    <interactant intactId="EBI-2108053">
        <id>Q14511</id>
    </interactant>
    <interactant intactId="EBI-10172814">
        <id>P86479</id>
        <label>PRR20C</label>
    </interactant>
    <organismsDiffer>false</organismsDiffer>
    <experiments>3</experiments>
</comment>
<comment type="interaction">
    <interactant intactId="EBI-2108053">
        <id>Q14511</id>
    </interactant>
    <interactant intactId="EBI-740322">
        <id>Q93062</id>
        <label>RBPMS</label>
    </interactant>
    <organismsDiffer>false</organismsDiffer>
    <experiments>3</experiments>
</comment>
<comment type="interaction">
    <interactant intactId="EBI-2108053">
        <id>Q14511</id>
    </interactant>
    <interactant intactId="EBI-307352">
        <id>Q04864</id>
        <label>REL</label>
    </interactant>
    <organismsDiffer>false</organismsDiffer>
    <experiments>3</experiments>
</comment>
<comment type="interaction">
    <interactant intactId="EBI-2108053">
        <id>Q14511</id>
    </interactant>
    <interactant intactId="EBI-746118">
        <id>Q8HWS3</id>
        <label>RFX6</label>
    </interactant>
    <organismsDiffer>false</organismsDiffer>
    <experiments>3</experiments>
</comment>
<comment type="interaction">
    <interactant intactId="EBI-2108053">
        <id>Q14511</id>
    </interactant>
    <interactant intactId="EBI-719493">
        <id>P14373</id>
        <label>TRIM27</label>
    </interactant>
    <organismsDiffer>false</organismsDiffer>
    <experiments>4</experiments>
</comment>
<comment type="interaction">
    <interactant intactId="EBI-2108053">
        <id>Q14511</id>
    </interactant>
    <interactant intactId="EBI-742327">
        <id>Q15654</id>
        <label>TRIP6</label>
    </interactant>
    <organismsDiffer>false</organismsDiffer>
    <experiments>3</experiments>
</comment>
<comment type="interaction">
    <interactant intactId="EBI-11746523">
        <id>Q14511-2</id>
    </interactant>
    <interactant intactId="EBI-11976299">
        <id>Q5BKX5-3</id>
        <label>ACTMAP</label>
    </interactant>
    <organismsDiffer>false</organismsDiffer>
    <experiments>3</experiments>
</comment>
<comment type="interaction">
    <interactant intactId="EBI-11746523">
        <id>Q14511-2</id>
    </interactant>
    <interactant intactId="EBI-11954519">
        <id>Q49AR9</id>
        <label>ANKS1A</label>
    </interactant>
    <organismsDiffer>false</organismsDiffer>
    <experiments>6</experiments>
</comment>
<comment type="interaction">
    <interactant intactId="EBI-11746523">
        <id>Q14511-2</id>
    </interactant>
    <interactant intactId="EBI-11524452">
        <id>Q8N9N5-2</id>
        <label>BANP</label>
    </interactant>
    <organismsDiffer>false</organismsDiffer>
    <experiments>3</experiments>
</comment>
<comment type="interaction">
    <interactant intactId="EBI-11746523">
        <id>Q14511-2</id>
    </interactant>
    <interactant intactId="EBI-3438291">
        <id>O14613</id>
        <label>CDC42EP2</label>
    </interactant>
    <organismsDiffer>false</organismsDiffer>
    <experiments>3</experiments>
</comment>
<comment type="interaction">
    <interactant intactId="EBI-11746523">
        <id>Q14511-2</id>
    </interactant>
    <interactant intactId="EBI-710457">
        <id>Q7L190</id>
        <label>DPPA4</label>
    </interactant>
    <organismsDiffer>false</organismsDiffer>
    <experiments>3</experiments>
</comment>
<comment type="interaction">
    <interactant intactId="EBI-11746523">
        <id>Q14511-2</id>
    </interactant>
    <interactant intactId="EBI-11980989">
        <id>Q5T9C2-3</id>
        <label>EEIG1</label>
    </interactant>
    <organismsDiffer>false</organismsDiffer>
    <experiments>3</experiments>
</comment>
<comment type="interaction">
    <interactant intactId="EBI-11746523">
        <id>Q14511-2</id>
    </interactant>
    <interactant intactId="EBI-371922">
        <id>Q96B26</id>
        <label>EXOSC8</label>
    </interactant>
    <organismsDiffer>false</organismsDiffer>
    <experiments>3</experiments>
</comment>
<comment type="interaction">
    <interactant intactId="EBI-11746523">
        <id>Q14511-2</id>
    </interactant>
    <interactant intactId="EBI-12193763">
        <id>A1KXE4-2</id>
        <label>FAM168B</label>
    </interactant>
    <organismsDiffer>false</organismsDiffer>
    <experiments>3</experiments>
</comment>
<comment type="interaction">
    <interactant intactId="EBI-11746523">
        <id>Q14511-2</id>
    </interactant>
    <interactant intactId="EBI-2806743">
        <id>P53539</id>
        <label>FOSB</label>
    </interactant>
    <organismsDiffer>false</organismsDiffer>
    <experiments>3</experiments>
</comment>
<comment type="interaction">
    <interactant intactId="EBI-11746523">
        <id>Q14511-2</id>
    </interactant>
    <interactant intactId="EBI-740785">
        <id>P49639</id>
        <label>HOXA1</label>
    </interactant>
    <organismsDiffer>false</organismsDiffer>
    <experiments>3</experiments>
</comment>
<comment type="interaction">
    <interactant intactId="EBI-11746523">
        <id>Q14511-2</id>
    </interactant>
    <interactant intactId="EBI-6509505">
        <id>Q0VD86</id>
        <label>INCA1</label>
    </interactant>
    <organismsDiffer>false</organismsDiffer>
    <experiments>3</experiments>
</comment>
<comment type="interaction">
    <interactant intactId="EBI-11746523">
        <id>Q14511-2</id>
    </interactant>
    <interactant intactId="EBI-10693436">
        <id>Q9BS75</id>
        <label>KLHL20</label>
    </interactant>
    <organismsDiffer>false</organismsDiffer>
    <experiments>3</experiments>
</comment>
<comment type="interaction">
    <interactant intactId="EBI-11746523">
        <id>Q14511-2</id>
    </interactant>
    <interactant intactId="EBI-1044146">
        <id>Q14532</id>
        <label>KRT32</label>
    </interactant>
    <organismsDiffer>false</organismsDiffer>
    <experiments>3</experiments>
</comment>
<comment type="interaction">
    <interactant intactId="EBI-11746523">
        <id>Q14511-2</id>
    </interactant>
    <interactant intactId="EBI-8474075">
        <id>Q68G74</id>
        <label>LHX8</label>
    </interactant>
    <organismsDiffer>false</organismsDiffer>
    <experiments>3</experiments>
</comment>
<comment type="interaction">
    <interactant intactId="EBI-11746523">
        <id>Q14511-2</id>
    </interactant>
    <interactant intactId="EBI-13288755">
        <id>A0JLT2-2</id>
        <label>MED19</label>
    </interactant>
    <organismsDiffer>false</organismsDiffer>
    <experiments>3</experiments>
</comment>
<comment type="interaction">
    <interactant intactId="EBI-11746523">
        <id>Q14511-2</id>
    </interactant>
    <interactant intactId="EBI-8641936">
        <id>Q15742</id>
        <label>NAB2</label>
    </interactant>
    <organismsDiffer>false</organismsDiffer>
    <experiments>3</experiments>
</comment>
<comment type="interaction">
    <interactant intactId="EBI-11746523">
        <id>Q14511-2</id>
    </interactant>
    <interactant intactId="EBI-307386">
        <id>P25963</id>
        <label>NFKBIA</label>
    </interactant>
    <organismsDiffer>false</organismsDiffer>
    <experiments>3</experiments>
</comment>
<comment type="interaction">
    <interactant intactId="EBI-11746523">
        <id>Q14511-2</id>
    </interactant>
    <interactant intactId="EBI-22310682">
        <id>P0DPK4</id>
        <label>NOTCH2NLC</label>
    </interactant>
    <organismsDiffer>false</organismsDiffer>
    <experiments>3</experiments>
</comment>
<comment type="interaction">
    <interactant intactId="EBI-11746523">
        <id>Q14511-2</id>
    </interactant>
    <interactant intactId="EBI-79893">
        <id>Q92569</id>
        <label>PIK3R3</label>
    </interactant>
    <organismsDiffer>false</organismsDiffer>
    <experiments>3</experiments>
</comment>
<comment type="interaction">
    <interactant intactId="EBI-11746523">
        <id>Q14511-2</id>
    </interactant>
    <interactant intactId="EBI-2860740">
        <id>Q96QH2</id>
        <label>PRAM1</label>
    </interactant>
    <organismsDiffer>false</organismsDiffer>
    <experiments>4</experiments>
</comment>
<comment type="interaction">
    <interactant intactId="EBI-11746523">
        <id>Q14511-2</id>
    </interactant>
    <interactant intactId="EBI-746118">
        <id>Q8HWS3</id>
        <label>RFX6</label>
    </interactant>
    <organismsDiffer>false</organismsDiffer>
    <experiments>3</experiments>
</comment>
<comment type="interaction">
    <interactant intactId="EBI-11746523">
        <id>Q14511-2</id>
    </interactant>
    <interactant intactId="EBI-12096770">
        <id>O60806</id>
        <label>TBX19</label>
    </interactant>
    <organismsDiffer>false</organismsDiffer>
    <experiments>3</experiments>
</comment>
<comment type="interaction">
    <interactant intactId="EBI-11746523">
        <id>Q14511-2</id>
    </interactant>
    <interactant intactId="EBI-355744">
        <id>Q12933</id>
        <label>TRAF2</label>
    </interactant>
    <organismsDiffer>false</organismsDiffer>
    <experiments>3</experiments>
</comment>
<comment type="interaction">
    <interactant intactId="EBI-11746523">
        <id>Q14511-2</id>
    </interactant>
    <interactant intactId="EBI-740098">
        <id>P36406</id>
        <label>TRIM23</label>
    </interactant>
    <organismsDiffer>false</organismsDiffer>
    <experiments>3</experiments>
</comment>
<comment type="interaction">
    <interactant intactId="EBI-11746523">
        <id>Q14511-2</id>
    </interactant>
    <interactant intactId="EBI-12040603">
        <id>Q9NZC7-5</id>
        <label>WWOX</label>
    </interactant>
    <organismsDiffer>false</organismsDiffer>
    <experiments>3</experiments>
</comment>
<comment type="interaction">
    <interactant intactId="EBI-11746523">
        <id>Q14511-2</id>
    </interactant>
    <interactant intactId="EBI-7254550">
        <id>P36508</id>
        <label>ZNF76</label>
    </interactant>
    <organismsDiffer>false</organismsDiffer>
    <experiments>3</experiments>
</comment>
<comment type="subcellular location">
    <subcellularLocation>
        <location evidence="7">Cytoplasm</location>
        <location evidence="7">Cell cortex</location>
    </subcellularLocation>
    <subcellularLocation>
        <location evidence="18 19 24">Nucleus</location>
    </subcellularLocation>
    <subcellularLocation>
        <location evidence="19">Golgi apparatus</location>
    </subcellularLocation>
    <subcellularLocation>
        <location evidence="16 19">Cell projection</location>
        <location evidence="16 19">Lamellipodium</location>
    </subcellularLocation>
    <subcellularLocation>
        <location evidence="7 24">Cytoplasm</location>
    </subcellularLocation>
    <subcellularLocation>
        <location evidence="12 13 17 19">Cell junction</location>
        <location evidence="12 13 17 19">Focal adhesion</location>
    </subcellularLocation>
    <subcellularLocation>
        <location evidence="7">Cytoplasm</location>
        <location evidence="7">Cytoskeleton</location>
    </subcellularLocation>
    <subcellularLocation>
        <location evidence="9 24">Cytoplasm</location>
        <location evidence="9 24">Cytoskeleton</location>
        <location evidence="9 24">Spindle pole</location>
    </subcellularLocation>
    <subcellularLocation>
        <location evidence="11">Cell projection</location>
        <location evidence="11">Cilium</location>
    </subcellularLocation>
    <subcellularLocation>
        <location evidence="11">Cytoplasm</location>
        <location evidence="11">Cytoskeleton</location>
        <location evidence="11">Cilium basal body</location>
    </subcellularLocation>
    <subcellularLocation>
        <location evidence="1">Basolateral cell membrane</location>
    </subcellularLocation>
</comment>
<comment type="subcellular location">
    <molecule>Enhancer of filamentation 1 p55</molecule>
    <subcellularLocation>
        <location evidence="24">Cytoplasm</location>
        <location evidence="24">Cytoskeleton</location>
        <location evidence="24">Spindle</location>
    </subcellularLocation>
</comment>
<comment type="alternative products">
    <event type="alternative splicing"/>
    <isoform>
        <id>Q14511-1</id>
        <name>1</name>
        <sequence type="displayed"/>
    </isoform>
    <isoform>
        <id>Q14511-2</id>
        <name>2</name>
        <sequence type="described" ref="VSP_042835 VSP_042836"/>
    </isoform>
    <isoform>
        <id>Q14511-3</id>
        <name>3</name>
        <sequence type="described" ref="VSP_044579"/>
    </isoform>
</comment>
<comment type="tissue specificity">
    <text evidence="21 23 24">Expressed in B-cells (at protein level) (PubMed:9020138). Expressed in the respiratory epithelium of the main bronchi to the bronchioles in the lungs (at protein level) (PubMed:9584194). High levels detected in kidney, lung, and placenta (PubMed:9584194). Expressed in lymphocytes (PubMed:9497377).</text>
</comment>
<comment type="developmental stage">
    <text evidence="24">initially expressed in the fetus (at protein level).</text>
</comment>
<comment type="induction">
    <text evidence="18">Induced by oxidant stress in pulmonary artery endothelial cells.</text>
</comment>
<comment type="domain">
    <text evidence="5 19 21">Contains a central domain containing multiple potential SH2-binding sites and a C-terminal domain containing a divergent helix-loop-helix (HLH) motif (PubMed:10502414). The SH2-binding sites putatively bind CRKL SH2 domains (PubMed:9020138). The HLH motif confers specific interaction with the HLH protein ID2 (PubMed:10502414). It is absolutely required for the induction of pseudohyphal growth in yeast and mediates homodimerization and heterodimerization with BCAR1/p130cas (PubMed:10502414, PubMed:8668148).</text>
</comment>
<comment type="PTM">
    <text evidence="24">Cell cycle-regulated processing produces four isoforms: p115, p105, p65, and p55. Isoform p115 arises from p105 phosphorylation and appears later in the cell cycle. Isoform p55 arises from p105 as a result of cleavage at a caspase cleavage-related site and it appears specifically at mitosis. The p65 isoform is poorly detected.</text>
</comment>
<comment type="PTM">
    <text evidence="8">Polyubiquitinated by ITCH/AIP4, leading to proteasomal degradation.</text>
</comment>
<comment type="PTM">
    <text evidence="2 14 17 21 22 23">PTK2/FAK1 phosphorylates the protein at the YDYVHL motif (conserved among all cas proteins) following integrin stimulation (PubMed:9360983). The SRC family kinases (FYN, SRC, LCK and CRK) are recruited to the phosphorylated sites and can phosphorylate other tyrosine residues (PubMed:9020138). Ligation of either integrin beta-1 or B-cell antigen receptor on tonsillar B-cells and B-cell lines promotes tyrosine phosphorylation and both integrin and BCR-mediated tyrosine phosphorylation requires an intact actin network (PubMed:9020138). Phosphorylation is required to recruit NEDD9 to T-cell receptor microclusters at the periphery of newly formed immunological synapses (By similarity). In fibroblasts transformation with oncogene v-ABL results in an increase in tyrosine phosphorylation. Transiently phosphorylated following CD3 cross-linking and this phosphorylated form binds to CRKL and C3G (PubMed:9497377). A mutant lacking the SH3 domain is phosphorylated upon CD3 cross-linking but not upon integrin beta-1 cross-linking (PubMed:9497377). Tyrosine phosphorylation occurs upon stimulation of the G-protein coupled C1a calcitonin receptor. Calcitonin-stimulated tyrosine phosphorylation is mediated by calcium- and protein kinase C-dependent mechanisms and requires the integrity of the actin cytoskeleton. Phosphorylation at Ser-369 induces proteasomal degradation (PubMed:19539609). Phosphorylated by LYN (PubMed:9020138). Phosphorylation at Ser-780 by CSNK1D or CSNK1E, or phosphorylation of Thr-804 by CSNK1E enhances the interaction of NEDD9 with PLK1 (PubMed:29191835).</text>
</comment>
<comment type="similarity">
    <text evidence="32">Belongs to the CAS family.</text>
</comment>